<evidence type="ECO:0000250" key="1">
    <source>
        <dbReference type="UniProtKB" id="Q9P2K5"/>
    </source>
</evidence>
<evidence type="ECO:0000255" key="2">
    <source>
        <dbReference type="PROSITE-ProRule" id="PRU00176"/>
    </source>
</evidence>
<evidence type="ECO:0000256" key="3">
    <source>
        <dbReference type="SAM" id="MobiDB-lite"/>
    </source>
</evidence>
<evidence type="ECO:0000269" key="4">
    <source>
    </source>
</evidence>
<evidence type="ECO:0000269" key="5">
    <source>
    </source>
</evidence>
<evidence type="ECO:0000269" key="6">
    <source>
    </source>
</evidence>
<evidence type="ECO:0000303" key="7">
    <source>
    </source>
</evidence>
<evidence type="ECO:0000303" key="8">
    <source>
    </source>
</evidence>
<evidence type="ECO:0000303" key="9">
    <source>
    </source>
</evidence>
<evidence type="ECO:0000303" key="10">
    <source>
    </source>
</evidence>
<evidence type="ECO:0000305" key="11"/>
<evidence type="ECO:0007744" key="12">
    <source>
    </source>
</evidence>
<proteinExistence type="evidence at protein level"/>
<gene>
    <name type="primary">Myef2</name>
    <name type="synonym">Kiaa1341</name>
    <name type="synonym">Mef2</name>
</gene>
<dbReference type="EMBL" id="AK048404">
    <property type="protein sequence ID" value="BAC33325.1"/>
    <property type="molecule type" value="mRNA"/>
</dbReference>
<dbReference type="EMBL" id="AK129336">
    <property type="protein sequence ID" value="BAC98146.1"/>
    <property type="status" value="ALT_INIT"/>
    <property type="molecule type" value="mRNA"/>
</dbReference>
<dbReference type="EMBL" id="BC060946">
    <property type="protein sequence ID" value="AAH60946.1"/>
    <property type="status" value="ALT_INIT"/>
    <property type="molecule type" value="mRNA"/>
</dbReference>
<dbReference type="EMBL" id="AF483504">
    <property type="protein sequence ID" value="AAL90778.1"/>
    <property type="molecule type" value="mRNA"/>
</dbReference>
<dbReference type="EMBL" id="AF483505">
    <property type="protein sequence ID" value="AAL90779.1"/>
    <property type="molecule type" value="mRNA"/>
</dbReference>
<dbReference type="EMBL" id="U13262">
    <property type="protein sequence ID" value="AAA78270.1"/>
    <property type="molecule type" value="mRNA"/>
</dbReference>
<dbReference type="CCDS" id="CCDS50690.1">
    <molecule id="Q8C854-3"/>
</dbReference>
<dbReference type="CCDS" id="CCDS50691.1">
    <molecule id="Q8C854-4"/>
</dbReference>
<dbReference type="PIR" id="A56704">
    <property type="entry name" value="A56704"/>
</dbReference>
<dbReference type="RefSeq" id="NP_001155889.1">
    <molecule id="Q8C854-4"/>
    <property type="nucleotide sequence ID" value="NM_001162417.2"/>
</dbReference>
<dbReference type="RefSeq" id="NP_001388772.1">
    <molecule id="Q8C854-4"/>
    <property type="nucleotide sequence ID" value="NM_001401843.1"/>
</dbReference>
<dbReference type="RefSeq" id="NP_034982.2">
    <molecule id="Q8C854-3"/>
    <property type="nucleotide sequence ID" value="NM_010852.3"/>
</dbReference>
<dbReference type="RefSeq" id="XP_006498947.1">
    <molecule id="Q8C854-3"/>
    <property type="nucleotide sequence ID" value="XM_006498884.4"/>
</dbReference>
<dbReference type="RefSeq" id="XP_017171620.1">
    <molecule id="Q8C854-4"/>
    <property type="nucleotide sequence ID" value="XM_017316131.3"/>
</dbReference>
<dbReference type="RefSeq" id="XP_017171621.1">
    <molecule id="Q8C854-4"/>
    <property type="nucleotide sequence ID" value="XM_017316132.3"/>
</dbReference>
<dbReference type="RefSeq" id="XP_017171623.1">
    <molecule id="Q8C854-4"/>
    <property type="nucleotide sequence ID" value="XM_017316134.3"/>
</dbReference>
<dbReference type="SMR" id="Q8C854"/>
<dbReference type="BioGRID" id="201640">
    <property type="interactions" value="24"/>
</dbReference>
<dbReference type="FunCoup" id="Q8C854">
    <property type="interactions" value="4177"/>
</dbReference>
<dbReference type="IntAct" id="Q8C854">
    <property type="interactions" value="11"/>
</dbReference>
<dbReference type="MINT" id="Q8C854"/>
<dbReference type="STRING" id="10090.ENSMUSP00000123088"/>
<dbReference type="iPTMnet" id="Q8C854"/>
<dbReference type="PhosphoSitePlus" id="Q8C854"/>
<dbReference type="SwissPalm" id="Q8C854"/>
<dbReference type="jPOST" id="Q8C854"/>
<dbReference type="PaxDb" id="10090-ENSMUSP00000123088"/>
<dbReference type="PeptideAtlas" id="Q8C854"/>
<dbReference type="ProteomicsDB" id="286095">
    <molecule id="Q8C854-4"/>
</dbReference>
<dbReference type="ProteomicsDB" id="286096">
    <molecule id="Q8C854-3"/>
</dbReference>
<dbReference type="ProteomicsDB" id="286097">
    <molecule id="Q8C854-1"/>
</dbReference>
<dbReference type="ProteomicsDB" id="286098">
    <molecule id="Q8C854-2"/>
</dbReference>
<dbReference type="Pumba" id="Q8C854"/>
<dbReference type="DNASU" id="17876"/>
<dbReference type="Ensembl" id="ENSMUST00000061419.9">
    <molecule id="Q8C854-2"/>
    <property type="protein sequence ID" value="ENSMUSP00000058811.8"/>
    <property type="gene ID" value="ENSMUSG00000049230.9"/>
</dbReference>
<dbReference type="Ensembl" id="ENSMUST00000067780.10">
    <molecule id="Q8C854-3"/>
    <property type="protein sequence ID" value="ENSMUSP00000066312.4"/>
    <property type="gene ID" value="ENSMUSG00000027201.17"/>
</dbReference>
<dbReference type="Ensembl" id="ENSMUST00000110501.8">
    <molecule id="Q8C854-3"/>
    <property type="protein sequence ID" value="ENSMUSP00000106127.2"/>
    <property type="gene ID" value="ENSMUSG00000027201.17"/>
</dbReference>
<dbReference type="Ensembl" id="ENSMUST00000152367.8">
    <molecule id="Q8C854-4"/>
    <property type="protein sequence ID" value="ENSMUSP00000123088.2"/>
    <property type="gene ID" value="ENSMUSG00000027201.17"/>
</dbReference>
<dbReference type="GeneID" id="17876"/>
<dbReference type="KEGG" id="mmu:17876"/>
<dbReference type="UCSC" id="uc008mbw.2">
    <molecule id="Q8C854-4"/>
    <property type="organism name" value="mouse"/>
</dbReference>
<dbReference type="UCSC" id="uc008mby.2">
    <molecule id="Q8C854-3"/>
    <property type="organism name" value="mouse"/>
</dbReference>
<dbReference type="UCSC" id="uc012cdb.1">
    <molecule id="Q8C854-2"/>
    <property type="organism name" value="mouse"/>
</dbReference>
<dbReference type="AGR" id="MGI:104592"/>
<dbReference type="CTD" id="50804"/>
<dbReference type="MGI" id="MGI:104592">
    <property type="gene designation" value="Myef2"/>
</dbReference>
<dbReference type="VEuPathDB" id="HostDB:ENSMUSG00000027201"/>
<dbReference type="VEuPathDB" id="HostDB:ENSMUSG00000049230"/>
<dbReference type="eggNOG" id="KOG0118">
    <property type="taxonomic scope" value="Eukaryota"/>
</dbReference>
<dbReference type="GeneTree" id="ENSGT00940000157397"/>
<dbReference type="HOGENOM" id="CLU_019566_1_0_1"/>
<dbReference type="InParanoid" id="Q8C854"/>
<dbReference type="OMA" id="GPMNADH"/>
<dbReference type="OrthoDB" id="610462at2759"/>
<dbReference type="PhylomeDB" id="Q8C854"/>
<dbReference type="TreeFam" id="TF313406"/>
<dbReference type="BioGRID-ORCS" id="17876">
    <property type="hits" value="4 hits in 80 CRISPR screens"/>
</dbReference>
<dbReference type="CD-CODE" id="CE726F99">
    <property type="entry name" value="Postsynaptic density"/>
</dbReference>
<dbReference type="ChiTaRS" id="Myef2">
    <property type="organism name" value="mouse"/>
</dbReference>
<dbReference type="PRO" id="PR:Q8C854"/>
<dbReference type="Proteomes" id="UP000000589">
    <property type="component" value="Chromosome 2"/>
</dbReference>
<dbReference type="Proteomes" id="UP000000589">
    <property type="component" value="Chromosome 3"/>
</dbReference>
<dbReference type="RNAct" id="Q8C854">
    <property type="molecule type" value="protein"/>
</dbReference>
<dbReference type="Bgee" id="ENSMUSG00000027201">
    <property type="expression patterns" value="Expressed in ventricular zone and 243 other cell types or tissues"/>
</dbReference>
<dbReference type="ExpressionAtlas" id="Q8C854">
    <property type="expression patterns" value="baseline and differential"/>
</dbReference>
<dbReference type="GO" id="GO:0005634">
    <property type="term" value="C:nucleus"/>
    <property type="evidence" value="ECO:0007669"/>
    <property type="project" value="UniProtKB-SubCell"/>
</dbReference>
<dbReference type="GO" id="GO:0001227">
    <property type="term" value="F:DNA-binding transcription repressor activity, RNA polymerase II-specific"/>
    <property type="evidence" value="ECO:0000314"/>
    <property type="project" value="NTNU_SB"/>
</dbReference>
<dbReference type="GO" id="GO:0003723">
    <property type="term" value="F:RNA binding"/>
    <property type="evidence" value="ECO:0007669"/>
    <property type="project" value="UniProtKB-KW"/>
</dbReference>
<dbReference type="GO" id="GO:0000978">
    <property type="term" value="F:RNA polymerase II cis-regulatory region sequence-specific DNA binding"/>
    <property type="evidence" value="ECO:0000314"/>
    <property type="project" value="NTNU_SB"/>
</dbReference>
<dbReference type="GO" id="GO:0000122">
    <property type="term" value="P:negative regulation of transcription by RNA polymerase II"/>
    <property type="evidence" value="ECO:0000314"/>
    <property type="project" value="NTNU_SB"/>
</dbReference>
<dbReference type="CDD" id="cd12658">
    <property type="entry name" value="RRM1_MYEF2"/>
    <property type="match status" value="1"/>
</dbReference>
<dbReference type="CDD" id="cd12660">
    <property type="entry name" value="RRM2_MYEF2"/>
    <property type="match status" value="1"/>
</dbReference>
<dbReference type="CDD" id="cd12662">
    <property type="entry name" value="RRM3_MYEF2"/>
    <property type="match status" value="1"/>
</dbReference>
<dbReference type="FunFam" id="3.30.70.330:FF:000033">
    <property type="entry name" value="heterogeneous nuclear ribonucleoprotein M isoform X1"/>
    <property type="match status" value="1"/>
</dbReference>
<dbReference type="FunFam" id="3.30.70.330:FF:000034">
    <property type="entry name" value="heterogeneous nuclear ribonucleoprotein M isoform X1"/>
    <property type="match status" value="1"/>
</dbReference>
<dbReference type="FunFam" id="3.30.70.330:FF:000625">
    <property type="entry name" value="myelin expression factor 2 isoform X1"/>
    <property type="match status" value="1"/>
</dbReference>
<dbReference type="Gene3D" id="3.30.70.330">
    <property type="match status" value="3"/>
</dbReference>
<dbReference type="InterPro" id="IPR034630">
    <property type="entry name" value="MYEF2_RRM1"/>
</dbReference>
<dbReference type="InterPro" id="IPR034631">
    <property type="entry name" value="MYEF2_RRM3"/>
</dbReference>
<dbReference type="InterPro" id="IPR012677">
    <property type="entry name" value="Nucleotide-bd_a/b_plait_sf"/>
</dbReference>
<dbReference type="InterPro" id="IPR035979">
    <property type="entry name" value="RBD_domain_sf"/>
</dbReference>
<dbReference type="InterPro" id="IPR000504">
    <property type="entry name" value="RRM_dom"/>
</dbReference>
<dbReference type="InterPro" id="IPR050374">
    <property type="entry name" value="RRT5_SRSF_SR"/>
</dbReference>
<dbReference type="PANTHER" id="PTHR23003">
    <property type="entry name" value="RNA RECOGNITION MOTIF RRM DOMAIN CONTAINING PROTEIN"/>
    <property type="match status" value="1"/>
</dbReference>
<dbReference type="Pfam" id="PF00076">
    <property type="entry name" value="RRM_1"/>
    <property type="match status" value="3"/>
</dbReference>
<dbReference type="SMART" id="SM00360">
    <property type="entry name" value="RRM"/>
    <property type="match status" value="3"/>
</dbReference>
<dbReference type="SUPFAM" id="SSF54928">
    <property type="entry name" value="RNA-binding domain, RBD"/>
    <property type="match status" value="3"/>
</dbReference>
<dbReference type="PROSITE" id="PS50102">
    <property type="entry name" value="RRM"/>
    <property type="match status" value="3"/>
</dbReference>
<sequence>MADADKSEAAAGDDGSQQQPAEPRRDTHPGEPEKPPRSSANGVKMENDESVKEEKSDLKEKSTGNKKANRFHPYSKDKNSGTGEKKGPNRNRVFISNIPYDMKWQAIKDLMREKVGEVTYVELFKDAEGKSRGCGVVEFKDEEFVKKALETMNKYDLSGRPLNIKEDPDGENARRALQRTGTSFQGSHASDVGSGLVNLPPSILNNPNIPPEVISNLQAGRLGSTIFVANLDFKVGWKKLKEVFSIAGTVKRADIKEDKDGKSRGMGTVTFEQAIEAVQAISMFNGQFLFDRPMHVKMDDKSVPHEDYRSHDSKTSQLPRGLGGIGMGLGPGGQPISASQLNITGVMGNLGPSGMGMDGPGFGGVNRIGGGVGFGGLEAMNSMAGFGGVGRMGELYRGAMTSSMERDFGRGDIGLSRGFGDSFGRLGSAMIGGFAGRIGASNMGPVGTGISGSMSGMSTVTGGMGMGLDRMSSSFDRMGPGIGAILERSIDVDRGFLSGPMGSGMRDRLGSKGNQIFVRNLPFDLTWQKLKEKFSQCGHVMFAEIKMENGKSKGCGTVRFESAESAEKACRIMNGIKISGREIDVRLDRNA</sequence>
<keyword id="KW-0025">Alternative splicing</keyword>
<keyword id="KW-0238">DNA-binding</keyword>
<keyword id="KW-1017">Isopeptide bond</keyword>
<keyword id="KW-0488">Methylation</keyword>
<keyword id="KW-0539">Nucleus</keyword>
<keyword id="KW-0597">Phosphoprotein</keyword>
<keyword id="KW-1185">Reference proteome</keyword>
<keyword id="KW-0677">Repeat</keyword>
<keyword id="KW-0678">Repressor</keyword>
<keyword id="KW-0694">RNA-binding</keyword>
<keyword id="KW-0804">Transcription</keyword>
<keyword id="KW-0832">Ubl conjugation</keyword>
<organism>
    <name type="scientific">Mus musculus</name>
    <name type="common">Mouse</name>
    <dbReference type="NCBI Taxonomy" id="10090"/>
    <lineage>
        <taxon>Eukaryota</taxon>
        <taxon>Metazoa</taxon>
        <taxon>Chordata</taxon>
        <taxon>Craniata</taxon>
        <taxon>Vertebrata</taxon>
        <taxon>Euteleostomi</taxon>
        <taxon>Mammalia</taxon>
        <taxon>Eutheria</taxon>
        <taxon>Euarchontoglires</taxon>
        <taxon>Glires</taxon>
        <taxon>Rodentia</taxon>
        <taxon>Myomorpha</taxon>
        <taxon>Muroidea</taxon>
        <taxon>Muridae</taxon>
        <taxon>Murinae</taxon>
        <taxon>Mus</taxon>
        <taxon>Mus</taxon>
    </lineage>
</organism>
<protein>
    <recommendedName>
        <fullName>Myelin expression factor 2</fullName>
        <shortName>MEF-2</shortName>
        <shortName>MyEF-2</shortName>
    </recommendedName>
</protein>
<accession>Q8C854</accession>
<accession>Q60690</accession>
<accession>Q6P930</accession>
<accession>Q6ZPT3</accession>
<accession>Q8QZZ1</accession>
<reference key="1">
    <citation type="journal article" date="2005" name="Science">
        <title>The transcriptional landscape of the mammalian genome.</title>
        <authorList>
            <person name="Carninci P."/>
            <person name="Kasukawa T."/>
            <person name="Katayama S."/>
            <person name="Gough J."/>
            <person name="Frith M.C."/>
            <person name="Maeda N."/>
            <person name="Oyama R."/>
            <person name="Ravasi T."/>
            <person name="Lenhard B."/>
            <person name="Wells C."/>
            <person name="Kodzius R."/>
            <person name="Shimokawa K."/>
            <person name="Bajic V.B."/>
            <person name="Brenner S.E."/>
            <person name="Batalov S."/>
            <person name="Forrest A.R."/>
            <person name="Zavolan M."/>
            <person name="Davis M.J."/>
            <person name="Wilming L.G."/>
            <person name="Aidinis V."/>
            <person name="Allen J.E."/>
            <person name="Ambesi-Impiombato A."/>
            <person name="Apweiler R."/>
            <person name="Aturaliya R.N."/>
            <person name="Bailey T.L."/>
            <person name="Bansal M."/>
            <person name="Baxter L."/>
            <person name="Beisel K.W."/>
            <person name="Bersano T."/>
            <person name="Bono H."/>
            <person name="Chalk A.M."/>
            <person name="Chiu K.P."/>
            <person name="Choudhary V."/>
            <person name="Christoffels A."/>
            <person name="Clutterbuck D.R."/>
            <person name="Crowe M.L."/>
            <person name="Dalla E."/>
            <person name="Dalrymple B.P."/>
            <person name="de Bono B."/>
            <person name="Della Gatta G."/>
            <person name="di Bernardo D."/>
            <person name="Down T."/>
            <person name="Engstrom P."/>
            <person name="Fagiolini M."/>
            <person name="Faulkner G."/>
            <person name="Fletcher C.F."/>
            <person name="Fukushima T."/>
            <person name="Furuno M."/>
            <person name="Futaki S."/>
            <person name="Gariboldi M."/>
            <person name="Georgii-Hemming P."/>
            <person name="Gingeras T.R."/>
            <person name="Gojobori T."/>
            <person name="Green R.E."/>
            <person name="Gustincich S."/>
            <person name="Harbers M."/>
            <person name="Hayashi Y."/>
            <person name="Hensch T.K."/>
            <person name="Hirokawa N."/>
            <person name="Hill D."/>
            <person name="Huminiecki L."/>
            <person name="Iacono M."/>
            <person name="Ikeo K."/>
            <person name="Iwama A."/>
            <person name="Ishikawa T."/>
            <person name="Jakt M."/>
            <person name="Kanapin A."/>
            <person name="Katoh M."/>
            <person name="Kawasawa Y."/>
            <person name="Kelso J."/>
            <person name="Kitamura H."/>
            <person name="Kitano H."/>
            <person name="Kollias G."/>
            <person name="Krishnan S.P."/>
            <person name="Kruger A."/>
            <person name="Kummerfeld S.K."/>
            <person name="Kurochkin I.V."/>
            <person name="Lareau L.F."/>
            <person name="Lazarevic D."/>
            <person name="Lipovich L."/>
            <person name="Liu J."/>
            <person name="Liuni S."/>
            <person name="McWilliam S."/>
            <person name="Madan Babu M."/>
            <person name="Madera M."/>
            <person name="Marchionni L."/>
            <person name="Matsuda H."/>
            <person name="Matsuzawa S."/>
            <person name="Miki H."/>
            <person name="Mignone F."/>
            <person name="Miyake S."/>
            <person name="Morris K."/>
            <person name="Mottagui-Tabar S."/>
            <person name="Mulder N."/>
            <person name="Nakano N."/>
            <person name="Nakauchi H."/>
            <person name="Ng P."/>
            <person name="Nilsson R."/>
            <person name="Nishiguchi S."/>
            <person name="Nishikawa S."/>
            <person name="Nori F."/>
            <person name="Ohara O."/>
            <person name="Okazaki Y."/>
            <person name="Orlando V."/>
            <person name="Pang K.C."/>
            <person name="Pavan W.J."/>
            <person name="Pavesi G."/>
            <person name="Pesole G."/>
            <person name="Petrovsky N."/>
            <person name="Piazza S."/>
            <person name="Reed J."/>
            <person name="Reid J.F."/>
            <person name="Ring B.Z."/>
            <person name="Ringwald M."/>
            <person name="Rost B."/>
            <person name="Ruan Y."/>
            <person name="Salzberg S.L."/>
            <person name="Sandelin A."/>
            <person name="Schneider C."/>
            <person name="Schoenbach C."/>
            <person name="Sekiguchi K."/>
            <person name="Semple C.A."/>
            <person name="Seno S."/>
            <person name="Sessa L."/>
            <person name="Sheng Y."/>
            <person name="Shibata Y."/>
            <person name="Shimada H."/>
            <person name="Shimada K."/>
            <person name="Silva D."/>
            <person name="Sinclair B."/>
            <person name="Sperling S."/>
            <person name="Stupka E."/>
            <person name="Sugiura K."/>
            <person name="Sultana R."/>
            <person name="Takenaka Y."/>
            <person name="Taki K."/>
            <person name="Tammoja K."/>
            <person name="Tan S.L."/>
            <person name="Tang S."/>
            <person name="Taylor M.S."/>
            <person name="Tegner J."/>
            <person name="Teichmann S.A."/>
            <person name="Ueda H.R."/>
            <person name="van Nimwegen E."/>
            <person name="Verardo R."/>
            <person name="Wei C.L."/>
            <person name="Yagi K."/>
            <person name="Yamanishi H."/>
            <person name="Zabarovsky E."/>
            <person name="Zhu S."/>
            <person name="Zimmer A."/>
            <person name="Hide W."/>
            <person name="Bult C."/>
            <person name="Grimmond S.M."/>
            <person name="Teasdale R.D."/>
            <person name="Liu E.T."/>
            <person name="Brusic V."/>
            <person name="Quackenbush J."/>
            <person name="Wahlestedt C."/>
            <person name="Mattick J.S."/>
            <person name="Hume D.A."/>
            <person name="Kai C."/>
            <person name="Sasaki D."/>
            <person name="Tomaru Y."/>
            <person name="Fukuda S."/>
            <person name="Kanamori-Katayama M."/>
            <person name="Suzuki M."/>
            <person name="Aoki J."/>
            <person name="Arakawa T."/>
            <person name="Iida J."/>
            <person name="Imamura K."/>
            <person name="Itoh M."/>
            <person name="Kato T."/>
            <person name="Kawaji H."/>
            <person name="Kawagashira N."/>
            <person name="Kawashima T."/>
            <person name="Kojima M."/>
            <person name="Kondo S."/>
            <person name="Konno H."/>
            <person name="Nakano K."/>
            <person name="Ninomiya N."/>
            <person name="Nishio T."/>
            <person name="Okada M."/>
            <person name="Plessy C."/>
            <person name="Shibata K."/>
            <person name="Shiraki T."/>
            <person name="Suzuki S."/>
            <person name="Tagami M."/>
            <person name="Waki K."/>
            <person name="Watahiki A."/>
            <person name="Okamura-Oho Y."/>
            <person name="Suzuki H."/>
            <person name="Kawai J."/>
            <person name="Hayashizaki Y."/>
        </authorList>
    </citation>
    <scope>NUCLEOTIDE SEQUENCE [LARGE SCALE MRNA] (ISOFORM 1)</scope>
    <source>
        <strain>C57BL/6J</strain>
        <tissue>Head</tissue>
    </source>
</reference>
<reference key="2">
    <citation type="journal article" date="2003" name="DNA Res.">
        <title>Prediction of the coding sequences of mouse homologues of KIAA gene: III. The complete nucleotide sequences of 500 mouse KIAA-homologous cDNAs identified by screening of terminal sequences of cDNA clones randomly sampled from size-fractionated libraries.</title>
        <authorList>
            <person name="Okazaki N."/>
            <person name="Kikuno R."/>
            <person name="Ohara R."/>
            <person name="Inamoto S."/>
            <person name="Koseki H."/>
            <person name="Hiraoka S."/>
            <person name="Saga Y."/>
            <person name="Nagase T."/>
            <person name="Ohara O."/>
            <person name="Koga H."/>
        </authorList>
    </citation>
    <scope>NUCLEOTIDE SEQUENCE [LARGE SCALE MRNA] (ISOFORM 3)</scope>
    <source>
        <tissue>Embryonic tail</tissue>
    </source>
</reference>
<reference key="3">
    <citation type="journal article" date="2004" name="Genome Res.">
        <title>The status, quality, and expansion of the NIH full-length cDNA project: the Mammalian Gene Collection (MGC).</title>
        <authorList>
            <consortium name="The MGC Project Team"/>
        </authorList>
    </citation>
    <scope>NUCLEOTIDE SEQUENCE [LARGE SCALE MRNA] OF 36-591 (ISOFORM 4)</scope>
    <source>
        <tissue>Testis</tissue>
    </source>
</reference>
<reference key="4">
    <citation type="journal article" date="2001" name="Mamm. Genome">
        <title>High-throughput sequence identification of gene coding variants within alcohol-related QTLs.</title>
        <authorList>
            <person name="Ehringer M.A."/>
            <person name="Thompson J."/>
            <person name="Conroy O."/>
            <person name="Xu Y."/>
            <person name="Yang F."/>
            <person name="Canniff J."/>
            <person name="Beeson M."/>
            <person name="Gordon L."/>
            <person name="Bennett B."/>
            <person name="Johnson T.E."/>
            <person name="Sikela J.M."/>
        </authorList>
    </citation>
    <scope>NUCLEOTIDE SEQUENCE [MRNA] OF 45-591 (ISOFORM 2)</scope>
    <source>
        <strain>ILS</strain>
        <strain>ISS</strain>
    </source>
</reference>
<reference key="5">
    <citation type="journal article" date="1995" name="Gene">
        <title>Regulation of mouse myelin basic protein gene transcription by a sequence-specific single-stranded DNA-binding protein in vitro.</title>
        <authorList>
            <person name="Steplewski A."/>
            <person name="Haas S."/>
            <person name="Amini S."/>
            <person name="Khalili K."/>
        </authorList>
    </citation>
    <scope>NUCLEOTIDE SEQUENCE [MRNA] OF 140-591 (ISOFORM 2)</scope>
    <scope>FUNCTION IN TRANSCRIPTIONAL REPRESSION</scope>
    <scope>DNA-BINDING</scope>
</reference>
<reference key="6">
    <citation type="journal article" date="1995" name="J. Biol. Chem.">
        <title>Identification of a sequence-specific single-stranded DNA binding protein that suppresses transcription of the mouse myelin basic protein gene.</title>
        <authorList>
            <person name="Haas S."/>
            <person name="Steplewski A."/>
            <person name="Siracusa L.D."/>
            <person name="Amini S."/>
            <person name="Khalili K."/>
        </authorList>
    </citation>
    <scope>FUNCTION IN TRANSCRIPTIONAL REPRESSION</scope>
    <scope>DNA-BINDING</scope>
    <scope>TISSUE SPECIFICITY</scope>
</reference>
<reference key="7">
    <citation type="journal article" date="1997" name="J. Cell. Biochem.">
        <title>Evidence for inhibition of MyEF-2 binding to MBP promoter by MEF-1/Pur alpha.</title>
        <authorList>
            <person name="Muralidharan V."/>
            <person name="Tretiakova A."/>
            <person name="Steplewski A."/>
            <person name="Haas S."/>
            <person name="Amini S."/>
            <person name="Johnson E."/>
            <person name="Khalili K."/>
        </authorList>
    </citation>
    <scope>FUNCTION IN TRANSCRIPTIONAL REPRESSION</scope>
    <scope>SUBUNIT</scope>
</reference>
<reference key="8">
    <citation type="journal article" date="2010" name="Cell">
        <title>A tissue-specific atlas of mouse protein phosphorylation and expression.</title>
        <authorList>
            <person name="Huttlin E.L."/>
            <person name="Jedrychowski M.P."/>
            <person name="Elias J.E."/>
            <person name="Goswami T."/>
            <person name="Rad R."/>
            <person name="Beausoleil S.A."/>
            <person name="Villen J."/>
            <person name="Haas W."/>
            <person name="Sowa M.E."/>
            <person name="Gygi S.P."/>
        </authorList>
    </citation>
    <scope>IDENTIFICATION BY MASS SPECTROMETRY [LARGE SCALE ANALYSIS]</scope>
    <source>
        <tissue>Lung</tissue>
        <tissue>Spleen</tissue>
        <tissue>Testis</tissue>
    </source>
</reference>
<reference key="9">
    <citation type="journal article" date="2014" name="Mol. Cell. Proteomics">
        <title>Immunoaffinity enrichment and mass spectrometry analysis of protein methylation.</title>
        <authorList>
            <person name="Guo A."/>
            <person name="Gu H."/>
            <person name="Zhou J."/>
            <person name="Mulhern D."/>
            <person name="Wang Y."/>
            <person name="Lee K.A."/>
            <person name="Yang V."/>
            <person name="Aguiar M."/>
            <person name="Kornhauser J."/>
            <person name="Jia X."/>
            <person name="Ren J."/>
            <person name="Beausoleil S.A."/>
            <person name="Silva J.C."/>
            <person name="Vemulapalli V."/>
            <person name="Bedford M.T."/>
            <person name="Comb M.J."/>
        </authorList>
    </citation>
    <scope>METHYLATION [LARGE SCALE ANALYSIS] AT ARG-397 AND ARG-417</scope>
    <scope>IDENTIFICATION BY MASS SPECTROMETRY [LARGE SCALE ANALYSIS]</scope>
    <source>
        <tissue>Brain</tissue>
    </source>
</reference>
<name>MYEF2_MOUSE</name>
<feature type="chain" id="PRO_0000081656" description="Myelin expression factor 2">
    <location>
        <begin position="1"/>
        <end position="591"/>
    </location>
</feature>
<feature type="domain" description="RRM 1" evidence="2">
    <location>
        <begin position="91"/>
        <end position="169"/>
    </location>
</feature>
<feature type="domain" description="RRM 2" evidence="2">
    <location>
        <begin position="224"/>
        <end position="301"/>
    </location>
</feature>
<feature type="domain" description="RRM 3" evidence="2">
    <location>
        <begin position="514"/>
        <end position="590"/>
    </location>
</feature>
<feature type="region of interest" description="Disordered" evidence="3">
    <location>
        <begin position="1"/>
        <end position="92"/>
    </location>
</feature>
<feature type="compositionally biased region" description="Basic and acidic residues" evidence="3">
    <location>
        <begin position="22"/>
        <end position="36"/>
    </location>
</feature>
<feature type="compositionally biased region" description="Basic and acidic residues" evidence="3">
    <location>
        <begin position="45"/>
        <end position="63"/>
    </location>
</feature>
<feature type="compositionally biased region" description="Basic and acidic residues" evidence="3">
    <location>
        <begin position="74"/>
        <end position="87"/>
    </location>
</feature>
<feature type="modified residue" description="Omega-N-methylarginine" evidence="12">
    <location>
        <position position="397"/>
    </location>
</feature>
<feature type="modified residue" description="Omega-N-methylarginine" evidence="12">
    <location>
        <position position="417"/>
    </location>
</feature>
<feature type="modified residue" description="Phosphoserine" evidence="1">
    <location>
        <position position="422"/>
    </location>
</feature>
<feature type="cross-link" description="Glycyl lysine isopeptide (Lys-Gly) (interchain with G-Cter in SUMO2)" evidence="1">
    <location>
        <position position="44"/>
    </location>
</feature>
<feature type="splice variant" id="VSP_013455" description="In isoform 2." evidence="7 10">
    <location>
        <begin position="354"/>
        <end position="370"/>
    </location>
</feature>
<feature type="splice variant" id="VSP_013456" description="In isoform 4." evidence="9">
    <original>ELYRGAMTSSMERDFGRGDIGLSRGFGDSFGRLGSAMIGGFAGRIGASNMGPVGTGIS</original>
    <variation>G</variation>
    <location>
        <begin position="394"/>
        <end position="451"/>
    </location>
</feature>
<feature type="splice variant" id="VSP_013457" description="In isoform 3." evidence="8">
    <original>GSAMIGGFAGRIGASNMGPVGTGIS</original>
    <variation>G</variation>
    <location>
        <begin position="427"/>
        <end position="451"/>
    </location>
</feature>
<feature type="splice variant" id="VSP_013458" description="In isoform 3." evidence="8">
    <original>SK</original>
    <variation>RN</variation>
    <location>
        <begin position="511"/>
        <end position="512"/>
    </location>
</feature>
<feature type="splice variant" id="VSP_013459" description="In isoform 3." evidence="8">
    <location>
        <begin position="513"/>
        <end position="591"/>
    </location>
</feature>
<feature type="splice variant" id="VSP_013460" description="In isoform 4." evidence="9">
    <original>HVMFAEIKMENGKSKGC</original>
    <variation>QINRDSKTHSNCGQHHS</variation>
    <location>
        <begin position="539"/>
        <end position="555"/>
    </location>
</feature>
<feature type="splice variant" id="VSP_013461" description="In isoform 4." evidence="9">
    <location>
        <begin position="556"/>
        <end position="591"/>
    </location>
</feature>
<feature type="sequence conflict" description="In Ref. 5; AAA78270." evidence="11" ref="5">
    <original>L</original>
    <variation>R</variation>
    <location>
        <position position="341"/>
    </location>
</feature>
<feature type="sequence conflict" description="In Ref. 5; AAA78270." evidence="11" ref="5">
    <original>C</original>
    <variation>L</variation>
    <location>
        <position position="537"/>
    </location>
</feature>
<comment type="function">
    <text evidence="4 5 6">Transcriptional repressor of the myelin basic protein gene (MBP). Binds to the proximal MB1 element 5'-TTGTCC-3' of the MBP promoter. Its binding to MB1 and function are inhibited by PURA.</text>
</comment>
<comment type="subunit">
    <text evidence="6">Monomer.</text>
</comment>
<comment type="subcellular location">
    <subcellularLocation>
        <location>Nucleus</location>
    </subcellularLocation>
</comment>
<comment type="alternative products">
    <event type="alternative splicing"/>
    <isoform>
        <id>Q8C854-4</id>
        <name>1</name>
        <sequence type="displayed"/>
    </isoform>
    <isoform>
        <id>Q8C854-3</id>
        <name>2</name>
        <sequence type="described" ref="VSP_013455"/>
    </isoform>
    <isoform>
        <id>Q8C854-1</id>
        <name>3</name>
        <sequence type="described" ref="VSP_013457 VSP_013458 VSP_013459"/>
    </isoform>
    <isoform>
        <id>Q8C854-2</id>
        <name>4</name>
        <sequence type="described" ref="VSP_013456 VSP_013460 VSP_013461"/>
    </isoform>
</comment>
<comment type="tissue specificity">
    <text evidence="5">Highly expressed in the brain.</text>
</comment>
<comment type="sequence caution" evidence="11">
    <conflict type="erroneous initiation">
        <sequence resource="EMBL-CDS" id="AAH60946"/>
    </conflict>
</comment>
<comment type="sequence caution" evidence="11">
    <conflict type="erroneous initiation">
        <sequence resource="EMBL-CDS" id="BAC98146"/>
    </conflict>
</comment>